<comment type="function">
    <text evidence="1">Formation of pseudouridine at positions 38, 39 and 40 in the anticodon stem and loop of transfer RNAs.</text>
</comment>
<comment type="catalytic activity">
    <reaction evidence="1">
        <text>uridine(38/39/40) in tRNA = pseudouridine(38/39/40) in tRNA</text>
        <dbReference type="Rhea" id="RHEA:22376"/>
        <dbReference type="Rhea" id="RHEA-COMP:10085"/>
        <dbReference type="Rhea" id="RHEA-COMP:10087"/>
        <dbReference type="ChEBI" id="CHEBI:65314"/>
        <dbReference type="ChEBI" id="CHEBI:65315"/>
        <dbReference type="EC" id="5.4.99.12"/>
    </reaction>
</comment>
<comment type="subunit">
    <text evidence="1">Homodimer.</text>
</comment>
<comment type="similarity">
    <text evidence="1">Belongs to the tRNA pseudouridine synthase TruA family.</text>
</comment>
<sequence length="249" mass="28320">MTRYKATISYDGYAFAGFQRQSHARSVQEEIEKTLTRLNKGQAITVHGAGRTDSGVHALGQVIHFDLPYQIDEEKLRFALDTQSPEDIDVISIELVADDFHCRYAKHSKTYEFIVDRGRPKNPMRRHYATHFPYPLDVERMQIAIKKLEGTHDFTGFTASGTSVEDKVRTITEASLIVDETGQFLTFTFSGNGFLYKQIRNMVGTLLKIGNNRMPVEQIALILEKKDRQLAGPTAAPNGLYLKEIRYEE</sequence>
<feature type="chain" id="PRO_1000194574" description="tRNA pseudouridine synthase A">
    <location>
        <begin position="1"/>
        <end position="249"/>
    </location>
</feature>
<feature type="active site" description="Nucleophile" evidence="1">
    <location>
        <position position="53"/>
    </location>
</feature>
<feature type="binding site" evidence="1">
    <location>
        <position position="111"/>
    </location>
    <ligand>
        <name>substrate</name>
    </ligand>
</feature>
<organism>
    <name type="scientific">Streptococcus pneumoniae (strain P1031)</name>
    <dbReference type="NCBI Taxonomy" id="488223"/>
    <lineage>
        <taxon>Bacteria</taxon>
        <taxon>Bacillati</taxon>
        <taxon>Bacillota</taxon>
        <taxon>Bacilli</taxon>
        <taxon>Lactobacillales</taxon>
        <taxon>Streptococcaceae</taxon>
        <taxon>Streptococcus</taxon>
    </lineage>
</organism>
<protein>
    <recommendedName>
        <fullName evidence="1">tRNA pseudouridine synthase A</fullName>
        <ecNumber evidence="1">5.4.99.12</ecNumber>
    </recommendedName>
    <alternativeName>
        <fullName evidence="1">tRNA pseudouridine(38-40) synthase</fullName>
    </alternativeName>
    <alternativeName>
        <fullName evidence="1">tRNA pseudouridylate synthase I</fullName>
    </alternativeName>
    <alternativeName>
        <fullName evidence="1">tRNA-uridine isomerase I</fullName>
    </alternativeName>
</protein>
<gene>
    <name evidence="1" type="primary">truA</name>
    <name type="ordered locus">SPP_1619</name>
</gene>
<dbReference type="EC" id="5.4.99.12" evidence="1"/>
<dbReference type="EMBL" id="CP000920">
    <property type="protein sequence ID" value="ACO21274.1"/>
    <property type="molecule type" value="Genomic_DNA"/>
</dbReference>
<dbReference type="RefSeq" id="WP_000199202.1">
    <property type="nucleotide sequence ID" value="NC_012467.1"/>
</dbReference>
<dbReference type="SMR" id="C1CLU3"/>
<dbReference type="KEGG" id="spp:SPP_1619"/>
<dbReference type="HOGENOM" id="CLU_014673_0_1_9"/>
<dbReference type="GO" id="GO:0003723">
    <property type="term" value="F:RNA binding"/>
    <property type="evidence" value="ECO:0007669"/>
    <property type="project" value="InterPro"/>
</dbReference>
<dbReference type="GO" id="GO:0160147">
    <property type="term" value="F:tRNA pseudouridine(38-40) synthase activity"/>
    <property type="evidence" value="ECO:0007669"/>
    <property type="project" value="UniProtKB-EC"/>
</dbReference>
<dbReference type="GO" id="GO:0031119">
    <property type="term" value="P:tRNA pseudouridine synthesis"/>
    <property type="evidence" value="ECO:0007669"/>
    <property type="project" value="UniProtKB-UniRule"/>
</dbReference>
<dbReference type="CDD" id="cd02570">
    <property type="entry name" value="PseudoU_synth_EcTruA"/>
    <property type="match status" value="1"/>
</dbReference>
<dbReference type="FunFam" id="3.30.70.580:FF:000001">
    <property type="entry name" value="tRNA pseudouridine synthase A"/>
    <property type="match status" value="1"/>
</dbReference>
<dbReference type="FunFam" id="3.30.70.660:FF:000009">
    <property type="entry name" value="tRNA pseudouridine synthase A"/>
    <property type="match status" value="1"/>
</dbReference>
<dbReference type="Gene3D" id="3.30.70.660">
    <property type="entry name" value="Pseudouridine synthase I, catalytic domain, C-terminal subdomain"/>
    <property type="match status" value="1"/>
</dbReference>
<dbReference type="Gene3D" id="3.30.70.580">
    <property type="entry name" value="Pseudouridine synthase I, catalytic domain, N-terminal subdomain"/>
    <property type="match status" value="1"/>
</dbReference>
<dbReference type="HAMAP" id="MF_00171">
    <property type="entry name" value="TruA"/>
    <property type="match status" value="1"/>
</dbReference>
<dbReference type="InterPro" id="IPR020103">
    <property type="entry name" value="PsdUridine_synth_cat_dom_sf"/>
</dbReference>
<dbReference type="InterPro" id="IPR001406">
    <property type="entry name" value="PsdUridine_synth_TruA"/>
</dbReference>
<dbReference type="InterPro" id="IPR020097">
    <property type="entry name" value="PsdUridine_synth_TruA_a/b_dom"/>
</dbReference>
<dbReference type="InterPro" id="IPR020095">
    <property type="entry name" value="PsdUridine_synth_TruA_C"/>
</dbReference>
<dbReference type="InterPro" id="IPR020094">
    <property type="entry name" value="TruA/RsuA/RluB/E/F_N"/>
</dbReference>
<dbReference type="NCBIfam" id="TIGR00071">
    <property type="entry name" value="hisT_truA"/>
    <property type="match status" value="1"/>
</dbReference>
<dbReference type="PANTHER" id="PTHR11142">
    <property type="entry name" value="PSEUDOURIDYLATE SYNTHASE"/>
    <property type="match status" value="1"/>
</dbReference>
<dbReference type="PANTHER" id="PTHR11142:SF0">
    <property type="entry name" value="TRNA PSEUDOURIDINE SYNTHASE-LIKE 1"/>
    <property type="match status" value="1"/>
</dbReference>
<dbReference type="Pfam" id="PF01416">
    <property type="entry name" value="PseudoU_synth_1"/>
    <property type="match status" value="2"/>
</dbReference>
<dbReference type="PIRSF" id="PIRSF001430">
    <property type="entry name" value="tRNA_psdUrid_synth"/>
    <property type="match status" value="1"/>
</dbReference>
<dbReference type="SUPFAM" id="SSF55120">
    <property type="entry name" value="Pseudouridine synthase"/>
    <property type="match status" value="1"/>
</dbReference>
<name>TRUA_STRZP</name>
<proteinExistence type="inferred from homology"/>
<keyword id="KW-0413">Isomerase</keyword>
<keyword id="KW-0819">tRNA processing</keyword>
<evidence type="ECO:0000255" key="1">
    <source>
        <dbReference type="HAMAP-Rule" id="MF_00171"/>
    </source>
</evidence>
<reference key="1">
    <citation type="journal article" date="2010" name="Genome Biol.">
        <title>Structure and dynamics of the pan-genome of Streptococcus pneumoniae and closely related species.</title>
        <authorList>
            <person name="Donati C."/>
            <person name="Hiller N.L."/>
            <person name="Tettelin H."/>
            <person name="Muzzi A."/>
            <person name="Croucher N.J."/>
            <person name="Angiuoli S.V."/>
            <person name="Oggioni M."/>
            <person name="Dunning Hotopp J.C."/>
            <person name="Hu F.Z."/>
            <person name="Riley D.R."/>
            <person name="Covacci A."/>
            <person name="Mitchell T.J."/>
            <person name="Bentley S.D."/>
            <person name="Kilian M."/>
            <person name="Ehrlich G.D."/>
            <person name="Rappuoli R."/>
            <person name="Moxon E.R."/>
            <person name="Masignani V."/>
        </authorList>
    </citation>
    <scope>NUCLEOTIDE SEQUENCE [LARGE SCALE GENOMIC DNA]</scope>
    <source>
        <strain>P1031</strain>
    </source>
</reference>
<accession>C1CLU3</accession>